<evidence type="ECO:0000250" key="1"/>
<evidence type="ECO:0000255" key="2">
    <source>
        <dbReference type="PROSITE-ProRule" id="PRU00142"/>
    </source>
</evidence>
<evidence type="ECO:0000255" key="3">
    <source>
        <dbReference type="PROSITE-ProRule" id="PRU00177"/>
    </source>
</evidence>
<evidence type="ECO:0000255" key="4">
    <source>
        <dbReference type="PROSITE-ProRule" id="PRU00266"/>
    </source>
</evidence>
<evidence type="ECO:0000255" key="5">
    <source>
        <dbReference type="PROSITE-ProRule" id="PRU00541"/>
    </source>
</evidence>
<evidence type="ECO:0000255" key="6">
    <source>
        <dbReference type="PROSITE-ProRule" id="PRU00542"/>
    </source>
</evidence>
<evidence type="ECO:0000255" key="7">
    <source>
        <dbReference type="PROSITE-ProRule" id="PRU00657"/>
    </source>
</evidence>
<evidence type="ECO:0000256" key="8">
    <source>
        <dbReference type="SAM" id="MobiDB-lite"/>
    </source>
</evidence>
<evidence type="ECO:0000305" key="9"/>
<reference key="1">
    <citation type="journal article" date="2013" name="Nature">
        <title>The zebrafish reference genome sequence and its relationship to the human genome.</title>
        <authorList>
            <person name="Howe K."/>
            <person name="Clark M.D."/>
            <person name="Torroja C.F."/>
            <person name="Torrance J."/>
            <person name="Berthelot C."/>
            <person name="Muffato M."/>
            <person name="Collins J.E."/>
            <person name="Humphray S."/>
            <person name="McLaren K."/>
            <person name="Matthews L."/>
            <person name="McLaren S."/>
            <person name="Sealy I."/>
            <person name="Caccamo M."/>
            <person name="Churcher C."/>
            <person name="Scott C."/>
            <person name="Barrett J.C."/>
            <person name="Koch R."/>
            <person name="Rauch G.J."/>
            <person name="White S."/>
            <person name="Chow W."/>
            <person name="Kilian B."/>
            <person name="Quintais L.T."/>
            <person name="Guerra-Assuncao J.A."/>
            <person name="Zhou Y."/>
            <person name="Gu Y."/>
            <person name="Yen J."/>
            <person name="Vogel J.H."/>
            <person name="Eyre T."/>
            <person name="Redmond S."/>
            <person name="Banerjee R."/>
            <person name="Chi J."/>
            <person name="Fu B."/>
            <person name="Langley E."/>
            <person name="Maguire S.F."/>
            <person name="Laird G.K."/>
            <person name="Lloyd D."/>
            <person name="Kenyon E."/>
            <person name="Donaldson S."/>
            <person name="Sehra H."/>
            <person name="Almeida-King J."/>
            <person name="Loveland J."/>
            <person name="Trevanion S."/>
            <person name="Jones M."/>
            <person name="Quail M."/>
            <person name="Willey D."/>
            <person name="Hunt A."/>
            <person name="Burton J."/>
            <person name="Sims S."/>
            <person name="McLay K."/>
            <person name="Plumb B."/>
            <person name="Davis J."/>
            <person name="Clee C."/>
            <person name="Oliver K."/>
            <person name="Clark R."/>
            <person name="Riddle C."/>
            <person name="Elliot D."/>
            <person name="Threadgold G."/>
            <person name="Harden G."/>
            <person name="Ware D."/>
            <person name="Begum S."/>
            <person name="Mortimore B."/>
            <person name="Kerry G."/>
            <person name="Heath P."/>
            <person name="Phillimore B."/>
            <person name="Tracey A."/>
            <person name="Corby N."/>
            <person name="Dunn M."/>
            <person name="Johnson C."/>
            <person name="Wood J."/>
            <person name="Clark S."/>
            <person name="Pelan S."/>
            <person name="Griffiths G."/>
            <person name="Smith M."/>
            <person name="Glithero R."/>
            <person name="Howden P."/>
            <person name="Barker N."/>
            <person name="Lloyd C."/>
            <person name="Stevens C."/>
            <person name="Harley J."/>
            <person name="Holt K."/>
            <person name="Panagiotidis G."/>
            <person name="Lovell J."/>
            <person name="Beasley H."/>
            <person name="Henderson C."/>
            <person name="Gordon D."/>
            <person name="Auger K."/>
            <person name="Wright D."/>
            <person name="Collins J."/>
            <person name="Raisen C."/>
            <person name="Dyer L."/>
            <person name="Leung K."/>
            <person name="Robertson L."/>
            <person name="Ambridge K."/>
            <person name="Leongamornlert D."/>
            <person name="McGuire S."/>
            <person name="Gilderthorp R."/>
            <person name="Griffiths C."/>
            <person name="Manthravadi D."/>
            <person name="Nichol S."/>
            <person name="Barker G."/>
            <person name="Whitehead S."/>
            <person name="Kay M."/>
            <person name="Brown J."/>
            <person name="Murnane C."/>
            <person name="Gray E."/>
            <person name="Humphries M."/>
            <person name="Sycamore N."/>
            <person name="Barker D."/>
            <person name="Saunders D."/>
            <person name="Wallis J."/>
            <person name="Babbage A."/>
            <person name="Hammond S."/>
            <person name="Mashreghi-Mohammadi M."/>
            <person name="Barr L."/>
            <person name="Martin S."/>
            <person name="Wray P."/>
            <person name="Ellington A."/>
            <person name="Matthews N."/>
            <person name="Ellwood M."/>
            <person name="Woodmansey R."/>
            <person name="Clark G."/>
            <person name="Cooper J."/>
            <person name="Tromans A."/>
            <person name="Grafham D."/>
            <person name="Skuce C."/>
            <person name="Pandian R."/>
            <person name="Andrews R."/>
            <person name="Harrison E."/>
            <person name="Kimberley A."/>
            <person name="Garnett J."/>
            <person name="Fosker N."/>
            <person name="Hall R."/>
            <person name="Garner P."/>
            <person name="Kelly D."/>
            <person name="Bird C."/>
            <person name="Palmer S."/>
            <person name="Gehring I."/>
            <person name="Berger A."/>
            <person name="Dooley C.M."/>
            <person name="Ersan-Urun Z."/>
            <person name="Eser C."/>
            <person name="Geiger H."/>
            <person name="Geisler M."/>
            <person name="Karotki L."/>
            <person name="Kirn A."/>
            <person name="Konantz J."/>
            <person name="Konantz M."/>
            <person name="Oberlander M."/>
            <person name="Rudolph-Geiger S."/>
            <person name="Teucke M."/>
            <person name="Lanz C."/>
            <person name="Raddatz G."/>
            <person name="Osoegawa K."/>
            <person name="Zhu B."/>
            <person name="Rapp A."/>
            <person name="Widaa S."/>
            <person name="Langford C."/>
            <person name="Yang F."/>
            <person name="Schuster S.C."/>
            <person name="Carter N.P."/>
            <person name="Harrow J."/>
            <person name="Ning Z."/>
            <person name="Herrero J."/>
            <person name="Searle S.M."/>
            <person name="Enright A."/>
            <person name="Geisler R."/>
            <person name="Plasterk R.H."/>
            <person name="Lee C."/>
            <person name="Westerfield M."/>
            <person name="de Jong P.J."/>
            <person name="Zon L.I."/>
            <person name="Postlethwait J.H."/>
            <person name="Nusslein-Volhard C."/>
            <person name="Hubbard T.J."/>
            <person name="Roest Crollius H."/>
            <person name="Rogers J."/>
            <person name="Stemple D.L."/>
        </authorList>
    </citation>
    <scope>NUCLEOTIDE SEQUENCE [LARGE SCALE GENOMIC DNA]</scope>
    <source>
        <strain>Tuebingen</strain>
    </source>
</reference>
<reference key="2">
    <citation type="journal article" date="2003" name="Nat. Genet.">
        <title>The microRNA-producing enzyme Dicer1 is essential for zebrafish development.</title>
        <authorList>
            <person name="Wienholds E."/>
            <person name="Koudijs M.J."/>
            <person name="van Eeden F.J.M."/>
            <person name="Cuppen E."/>
            <person name="Plasterk R.H.A."/>
        </authorList>
    </citation>
    <scope>NUCLEOTIDE SEQUENCE [MRNA] OF 612-1865</scope>
</reference>
<sequence length="1865" mass="210817">MAGLQLVTPASSPMGPFFGLPWQQEAIHDNIYTPRKYQVELLEAALEHNTIVCLNTGSGKTFIAVLLIKELSHQIRGENGKRTVFLVNAASSVAQQASTVRTHSDLQVGDYMSEDMTSWPEEMWNREMIENQVLVMTCHIFLHVLKNGVLPLSKINLLVFDECHLAITGHPYREIMKICEGCPSCPRILGLTASILNGKCDPCDLEEKIQNLEKILQSNAETATDLVVLDRYASQPREEVLDCGQYQDQSGLSERLLNELDEALNFLNDCNLSVHREDRDPTFISKQVLNDCRAVLTVLGPWCADKAAGIMVRELQKYIKHEQEELNRKFLLFTDTILRKIHALCEEHFSPASLDLKFVTPKVIRLLEILHEYKPFERQQFESVEWYNNRNQDNYVSWSDSEDDDEDEEAEAKEKTEANFPSPFTNILCGIIFVERRYTAVVLNRLIKEAGKQDPELAYISSNFITGHSIGKNQPRNKQMEVEFRKQEEVLRKFRAHETNLLIATSIVEEGVDIPKCNLVVRFDLPTEYRSYVQSKGRARAPVSNYIMLADSERTKTFQEDLKTYKAIEKILRNKCSKSAECNDFELEPVTDDDNVLPPYVLRSEDGGPRVTMNTAIGHVNRYCARLPSDPFTHLAPKCKTVEMNTGGYRSTLFLPINSPLRVPVTGPVMNCARLAEKAVALLCCEKLHKIGELDDHLMPVGKETVKYEEELDLHDEEETSVPGRPGSTKRRQCSPKAIPECLRGCYPVPEQPCYLYVIGMVLTTPLPDELNFRRRKLYPPEDTTRCFGILTAKPIPRIPHFPVYTRSGEVTISIELQKSGFSLSAEQLELITRLHQYIFSHILRLEKPALEFKPVEADSAYCVLPLNIVEDSNTLDLDFKFMEDIEKSEARIGIPNTQYTKQNPFIFKLEDYQDAVIIPRYRNFDQPHRFYVADVYTDLTPLSKFPSPEYETFAEYYKTKYNLDLSNVNQPLLDVDHTSSRLNLLTPRHLNQKGKALPLSSAEKRKAKWESLQNKQILVPELCAIHPIPASLWRKAVCLPSILYRLHCLLTAEELRSQTAIDAGVGAQTLPPDFRYPNLDFGWKKSIDSKSFISCPSACMEEDDDHCKLGTSSDSNHTAPESCSMEVSQPPEGAPNTPDEKLETLTLPVTDLNKDCFPNLPNGTQADSDDLPHRSDVCQCSQLGPLERDLSTQTTTSVSVRPSPAGEPQPWPSDECTGRSSDLCDPHVKKPTSKHCPKSETATSTPAPSETSSEDCRSACAGPAWDSPKTLGPNPGLILQALTLSNASDGFNLERLEMLGDSFLKHAITTYLFCTYPDAHEGRLSYMRSKKVSNCNLYRLGKKKGLPSRMVVSIFDPPVNWLPPGYVVNQDKSSTDKWDSDENKDLANGKASDDEDEDDDDEPEEAEVEPSKEDVNVEDDLEYYYEHIRFIDSMLIGSGAFGKKISLQPTDPGYEWKAPKKAHNSHFSPDGGADEFDYSSWDAMCYLDPSKAGEEDDFVVGFWNPSEENCGTDIGKQSISYDLHTEQCIADKSIADCVEALLGCYLTSCGERAAQLFLCSLGLKVLPPEKQSSGGSAELQYGWLKIPPRCMFEHPDAERTLNHLISGFLNFESKINYTFKNKAYLLQAFTHASYHYNTITDCYQRLEFLGDAILDYLITKHLYEDPRQHSPGVLTDLRSALVNNTIFASLAVKYDYHKYFKAVSPELFHVIDDFVQFQLEKNEMQGMDSELRRSEEDEEKEEDIEVPKAMGDIFESLAGAIYMDSGMSLETVWQVYYPMMRPLIEKFSANVPRSPVRELLEMEPETAKFSPAERTYDGKVRVTVEVVGKGKFKGVGRSYRIAKSAAARRALRSLKANQPQVQNN</sequence>
<feature type="chain" id="PRO_0000373985" description="Endoribonuclease Dicer">
    <location>
        <begin position="1"/>
        <end position="1865"/>
    </location>
</feature>
<feature type="domain" description="Helicase ATP-binding" evidence="5">
    <location>
        <begin position="41"/>
        <end position="213"/>
    </location>
</feature>
<feature type="domain" description="Helicase C-terminal" evidence="6">
    <location>
        <begin position="419"/>
        <end position="588"/>
    </location>
</feature>
<feature type="domain" description="Dicer dsRNA-binding fold" evidence="7">
    <location>
        <begin position="616"/>
        <end position="708"/>
    </location>
</feature>
<feature type="domain" description="PAZ" evidence="2">
    <location>
        <begin position="881"/>
        <end position="1028"/>
    </location>
</feature>
<feature type="domain" description="RNase III 1" evidence="3">
    <location>
        <begin position="1262"/>
        <end position="1385"/>
    </location>
</feature>
<feature type="domain" description="RNase III 2" evidence="3">
    <location>
        <begin position="1609"/>
        <end position="1767"/>
    </location>
</feature>
<feature type="domain" description="DRBM" evidence="4">
    <location>
        <begin position="1792"/>
        <end position="1857"/>
    </location>
</feature>
<feature type="region of interest" description="Disordered" evidence="8">
    <location>
        <begin position="397"/>
        <end position="417"/>
    </location>
</feature>
<feature type="region of interest" description="Disordered" evidence="8">
    <location>
        <begin position="713"/>
        <end position="732"/>
    </location>
</feature>
<feature type="region of interest" description="Disordered" evidence="8">
    <location>
        <begin position="1111"/>
        <end position="1142"/>
    </location>
</feature>
<feature type="region of interest" description="Disordered" evidence="8">
    <location>
        <begin position="1190"/>
        <end position="1259"/>
    </location>
</feature>
<feature type="region of interest" description="Disordered" evidence="8">
    <location>
        <begin position="1373"/>
        <end position="1417"/>
    </location>
</feature>
<feature type="short sequence motif" description="DECH box">
    <location>
        <begin position="161"/>
        <end position="164"/>
    </location>
</feature>
<feature type="compositionally biased region" description="Acidic residues" evidence="8">
    <location>
        <begin position="400"/>
        <end position="411"/>
    </location>
</feature>
<feature type="compositionally biased region" description="Polar residues" evidence="8">
    <location>
        <begin position="1111"/>
        <end position="1128"/>
    </location>
</feature>
<feature type="compositionally biased region" description="Polar residues" evidence="8">
    <location>
        <begin position="1192"/>
        <end position="1201"/>
    </location>
</feature>
<feature type="compositionally biased region" description="Low complexity" evidence="8">
    <location>
        <begin position="1240"/>
        <end position="1252"/>
    </location>
</feature>
<feature type="compositionally biased region" description="Basic and acidic residues" evidence="8">
    <location>
        <begin position="1374"/>
        <end position="1388"/>
    </location>
</feature>
<feature type="compositionally biased region" description="Acidic residues" evidence="8">
    <location>
        <begin position="1394"/>
        <end position="1409"/>
    </location>
</feature>
<feature type="binding site" evidence="5">
    <location>
        <begin position="54"/>
        <end position="61"/>
    </location>
    <ligand>
        <name>ATP</name>
        <dbReference type="ChEBI" id="CHEBI:30616"/>
    </ligand>
</feature>
<feature type="binding site" evidence="1">
    <location>
        <position position="1298"/>
    </location>
    <ligand>
        <name>Mg(2+)</name>
        <dbReference type="ChEBI" id="CHEBI:18420"/>
        <label>1</label>
    </ligand>
</feature>
<feature type="binding site" evidence="1">
    <location>
        <position position="1377"/>
    </location>
    <ligand>
        <name>Mg(2+)</name>
        <dbReference type="ChEBI" id="CHEBI:18420"/>
        <label>1</label>
    </ligand>
</feature>
<feature type="binding site" evidence="1">
    <location>
        <position position="1380"/>
    </location>
    <ligand>
        <name>Mg(2+)</name>
        <dbReference type="ChEBI" id="CHEBI:18420"/>
        <label>1</label>
    </ligand>
</feature>
<feature type="binding site" evidence="1">
    <location>
        <position position="1648"/>
    </location>
    <ligand>
        <name>Mg(2+)</name>
        <dbReference type="ChEBI" id="CHEBI:18420"/>
        <label>2</label>
    </ligand>
</feature>
<feature type="binding site" evidence="1">
    <location>
        <position position="1753"/>
    </location>
    <ligand>
        <name>Mg(2+)</name>
        <dbReference type="ChEBI" id="CHEBI:18420"/>
        <label>2</label>
    </ligand>
</feature>
<feature type="binding site" evidence="1">
    <location>
        <position position="1756"/>
    </location>
    <ligand>
        <name>Mg(2+)</name>
        <dbReference type="ChEBI" id="CHEBI:18420"/>
        <label>2</label>
    </ligand>
</feature>
<feature type="site" description="Important for activity" evidence="1">
    <location>
        <position position="1749"/>
    </location>
</feature>
<feature type="sequence conflict" description="In Ref. 2; AAQ90464." evidence="9" ref="2">
    <original>IPECLRGCYPVPE</original>
    <variation>VK</variation>
    <location>
        <begin position="739"/>
        <end position="751"/>
    </location>
</feature>
<feature type="sequence conflict" description="In Ref. 2; AAQ90464." evidence="9" ref="2">
    <original>R</original>
    <variation>K</variation>
    <location>
        <position position="921"/>
    </location>
</feature>
<comment type="function">
    <text evidence="1">Double-stranded RNA (dsRNA) endoribonuclease playing a central role in short dsRNA-mediated post-transcriptional gene silencing. Cleaves naturally occurring long dsRNAs and short hairpin pre-microRNAs (miRNA) into fragments of twenty-one to twenty-three nucleotides with 3' overhang of two nucleotides, producing respectively short interfering RNAs (siRNA) and mature microRNAs. SiRNAs and miRNAs serve as guide to direct the RNA-induced silencing complex (RISC) to complementary RNAs to degrade them or prevent their translation. Gene silencing mediated by siRNAs, also called RNA interference, controls the elimination of transcripts from mobile and repetitive DNA elements of the genome but also the degradation of exogenous RNA of viral origin for instance. The miRNA pathway on the other side is a mean to specifically regulate the expression of target genes (By similarity).</text>
</comment>
<comment type="catalytic activity">
    <reaction>
        <text>Endonucleolytic cleavage to 5'-phosphomonoester.</text>
        <dbReference type="EC" id="3.1.26.3"/>
    </reaction>
</comment>
<comment type="cofactor">
    <cofactor evidence="1">
        <name>Mg(2+)</name>
        <dbReference type="ChEBI" id="CHEBI:18420"/>
    </cofactor>
    <cofactor evidence="1">
        <name>Mn(2+)</name>
        <dbReference type="ChEBI" id="CHEBI:29035"/>
    </cofactor>
    <text evidence="1">Binds 2 magnesium or manganese ions per subunit.</text>
</comment>
<comment type="subunit">
    <text evidence="1">Component of the RISC loading complex (RLC), or micro-RNA (miRNA) loading complex (miRLC), which is composed of dicer1, ago2 and tarbp2; dicer1 and tarbp2 are required to process precursor miRNAs (pre-miRNAs) to mature miRNAs and then load them onto ago2. Note that the trimeric RLC/miRLC is also referred to as RISC (By similarity).</text>
</comment>
<comment type="subcellular location">
    <subcellularLocation>
        <location evidence="1">Cytoplasm</location>
    </subcellularLocation>
</comment>
<comment type="similarity">
    <text evidence="7">Belongs to the helicase family. Dicer subfamily.</text>
</comment>
<keyword id="KW-0067">ATP-binding</keyword>
<keyword id="KW-0963">Cytoplasm</keyword>
<keyword id="KW-0255">Endonuclease</keyword>
<keyword id="KW-0347">Helicase</keyword>
<keyword id="KW-0378">Hydrolase</keyword>
<keyword id="KW-0460">Magnesium</keyword>
<keyword id="KW-0464">Manganese</keyword>
<keyword id="KW-0479">Metal-binding</keyword>
<keyword id="KW-0540">Nuclease</keyword>
<keyword id="KW-0547">Nucleotide-binding</keyword>
<keyword id="KW-0597">Phosphoprotein</keyword>
<keyword id="KW-1185">Reference proteome</keyword>
<keyword id="KW-0677">Repeat</keyword>
<keyword id="KW-0694">RNA-binding</keyword>
<keyword id="KW-0943">RNA-mediated gene silencing</keyword>
<proteinExistence type="evidence at transcript level"/>
<name>DICER_DANRE</name>
<dbReference type="EC" id="3.1.26.3"/>
<dbReference type="EMBL" id="AL772219">
    <property type="status" value="NOT_ANNOTATED_CDS"/>
    <property type="molecule type" value="Genomic_DNA"/>
</dbReference>
<dbReference type="EMBL" id="AY386319">
    <property type="protein sequence ID" value="AAQ90464.1"/>
    <property type="molecule type" value="mRNA"/>
</dbReference>
<dbReference type="RefSeq" id="NP_001154925.1">
    <property type="nucleotide sequence ID" value="NM_001161453.2"/>
</dbReference>
<dbReference type="RefSeq" id="XP_005158722.1">
    <property type="nucleotide sequence ID" value="XM_005158665.5"/>
</dbReference>
<dbReference type="RefSeq" id="XP_005158723.1">
    <property type="nucleotide sequence ID" value="XM_005158666.5"/>
</dbReference>
<dbReference type="RefSeq" id="XP_021322789.1">
    <property type="nucleotide sequence ID" value="XM_021467114.2"/>
</dbReference>
<dbReference type="RefSeq" id="XP_021322790.1">
    <property type="nucleotide sequence ID" value="XM_021467115.2"/>
</dbReference>
<dbReference type="SMR" id="Q6TV19"/>
<dbReference type="FunCoup" id="Q6TV19">
    <property type="interactions" value="1486"/>
</dbReference>
<dbReference type="STRING" id="7955.ENSDARP00000045880"/>
<dbReference type="PaxDb" id="7955-ENSDARP00000045880"/>
<dbReference type="Ensembl" id="ENSDART00000045881">
    <property type="protein sequence ID" value="ENSDARP00000045880"/>
    <property type="gene ID" value="ENSDARG00000001129"/>
</dbReference>
<dbReference type="GeneID" id="324724"/>
<dbReference type="KEGG" id="dre:324724"/>
<dbReference type="AGR" id="ZFIN:ZDB-GENE-030131-3445"/>
<dbReference type="CTD" id="23405"/>
<dbReference type="ZFIN" id="ZDB-GENE-030131-3445">
    <property type="gene designation" value="dicer1"/>
</dbReference>
<dbReference type="eggNOG" id="KOG0701">
    <property type="taxonomic scope" value="Eukaryota"/>
</dbReference>
<dbReference type="HOGENOM" id="CLU_000907_4_4_1"/>
<dbReference type="InParanoid" id="Q6TV19"/>
<dbReference type="OrthoDB" id="2392202at2759"/>
<dbReference type="PhylomeDB" id="Q6TV19"/>
<dbReference type="TreeFam" id="TF330258"/>
<dbReference type="PRO" id="PR:Q6TV19"/>
<dbReference type="Proteomes" id="UP000000437">
    <property type="component" value="Alternate scaffold 17"/>
</dbReference>
<dbReference type="Proteomes" id="UP000000437">
    <property type="component" value="Chromosome 17"/>
</dbReference>
<dbReference type="Bgee" id="ENSDARG00000001129">
    <property type="expression patterns" value="Expressed in cardiac ventricle and 26 other cell types or tissues"/>
</dbReference>
<dbReference type="ExpressionAtlas" id="Q6TV19">
    <property type="expression patterns" value="baseline and differential"/>
</dbReference>
<dbReference type="GO" id="GO:0005737">
    <property type="term" value="C:cytoplasm"/>
    <property type="evidence" value="ECO:0000318"/>
    <property type="project" value="GO_Central"/>
</dbReference>
<dbReference type="GO" id="GO:0005634">
    <property type="term" value="C:nucleus"/>
    <property type="evidence" value="ECO:0000318"/>
    <property type="project" value="GO_Central"/>
</dbReference>
<dbReference type="GO" id="GO:0016442">
    <property type="term" value="C:RISC complex"/>
    <property type="evidence" value="ECO:0000250"/>
    <property type="project" value="UniProtKB"/>
</dbReference>
<dbReference type="GO" id="GO:0070578">
    <property type="term" value="C:RISC-loading complex"/>
    <property type="evidence" value="ECO:0000250"/>
    <property type="project" value="UniProtKB"/>
</dbReference>
<dbReference type="GO" id="GO:0005524">
    <property type="term" value="F:ATP binding"/>
    <property type="evidence" value="ECO:0007669"/>
    <property type="project" value="UniProtKB-KW"/>
</dbReference>
<dbReference type="GO" id="GO:0004530">
    <property type="term" value="F:deoxyribonuclease I activity"/>
    <property type="evidence" value="ECO:0000318"/>
    <property type="project" value="GO_Central"/>
</dbReference>
<dbReference type="GO" id="GO:0004386">
    <property type="term" value="F:helicase activity"/>
    <property type="evidence" value="ECO:0007669"/>
    <property type="project" value="UniProtKB-KW"/>
</dbReference>
<dbReference type="GO" id="GO:0046872">
    <property type="term" value="F:metal ion binding"/>
    <property type="evidence" value="ECO:0007669"/>
    <property type="project" value="UniProtKB-KW"/>
</dbReference>
<dbReference type="GO" id="GO:0070883">
    <property type="term" value="F:pre-miRNA binding"/>
    <property type="evidence" value="ECO:0000314"/>
    <property type="project" value="ZFIN"/>
</dbReference>
<dbReference type="GO" id="GO:0004525">
    <property type="term" value="F:ribonuclease III activity"/>
    <property type="evidence" value="ECO:0000318"/>
    <property type="project" value="GO_Central"/>
</dbReference>
<dbReference type="GO" id="GO:0003723">
    <property type="term" value="F:RNA binding"/>
    <property type="evidence" value="ECO:0000318"/>
    <property type="project" value="GO_Central"/>
</dbReference>
<dbReference type="GO" id="GO:0006309">
    <property type="term" value="P:apoptotic DNA fragmentation"/>
    <property type="evidence" value="ECO:0000318"/>
    <property type="project" value="GO_Central"/>
</dbReference>
<dbReference type="GO" id="GO:1904888">
    <property type="term" value="P:cranial skeletal system development"/>
    <property type="evidence" value="ECO:0000315"/>
    <property type="project" value="ZFIN"/>
</dbReference>
<dbReference type="GO" id="GO:0098795">
    <property type="term" value="P:global gene silencing by mRNA cleavage"/>
    <property type="evidence" value="ECO:0000250"/>
    <property type="project" value="UniProtKB"/>
</dbReference>
<dbReference type="GO" id="GO:0031507">
    <property type="term" value="P:heterochromatin formation"/>
    <property type="evidence" value="ECO:0000315"/>
    <property type="project" value="ZFIN"/>
</dbReference>
<dbReference type="GO" id="GO:0030318">
    <property type="term" value="P:melanocyte differentiation"/>
    <property type="evidence" value="ECO:0000315"/>
    <property type="project" value="ZFIN"/>
</dbReference>
<dbReference type="GO" id="GO:0035196">
    <property type="term" value="P:miRNA processing"/>
    <property type="evidence" value="ECO:0000315"/>
    <property type="project" value="ZFIN"/>
</dbReference>
<dbReference type="GO" id="GO:0035279">
    <property type="term" value="P:miRNA-mediated gene silencing by mRNA destabilization"/>
    <property type="evidence" value="ECO:0000316"/>
    <property type="project" value="ZFIN"/>
</dbReference>
<dbReference type="GO" id="GO:0035195">
    <property type="term" value="P:miRNA-mediated post-transcriptional gene silencing"/>
    <property type="evidence" value="ECO:0000315"/>
    <property type="project" value="ZFIN"/>
</dbReference>
<dbReference type="GO" id="GO:0014032">
    <property type="term" value="P:neural crest cell development"/>
    <property type="evidence" value="ECO:0000315"/>
    <property type="project" value="ZFIN"/>
</dbReference>
<dbReference type="GO" id="GO:0031054">
    <property type="term" value="P:pre-miRNA processing"/>
    <property type="evidence" value="ECO:0000314"/>
    <property type="project" value="ZFIN"/>
</dbReference>
<dbReference type="GO" id="GO:0050767">
    <property type="term" value="P:regulation of neurogenesis"/>
    <property type="evidence" value="ECO:0000315"/>
    <property type="project" value="ZFIN"/>
</dbReference>
<dbReference type="GO" id="GO:0030422">
    <property type="term" value="P:siRNA processing"/>
    <property type="evidence" value="ECO:0000250"/>
    <property type="project" value="UniProtKB"/>
</dbReference>
<dbReference type="GO" id="GO:0021591">
    <property type="term" value="P:ventricular system development"/>
    <property type="evidence" value="ECO:0000315"/>
    <property type="project" value="ZFIN"/>
</dbReference>
<dbReference type="CDD" id="cd18034">
    <property type="entry name" value="DEXHc_dicer"/>
    <property type="match status" value="1"/>
</dbReference>
<dbReference type="CDD" id="cd15903">
    <property type="entry name" value="Dicer_PBD"/>
    <property type="match status" value="1"/>
</dbReference>
<dbReference type="CDD" id="cd10843">
    <property type="entry name" value="DSRM_DICER"/>
    <property type="match status" value="1"/>
</dbReference>
<dbReference type="CDD" id="cd02843">
    <property type="entry name" value="PAZ_dicer_like"/>
    <property type="match status" value="1"/>
</dbReference>
<dbReference type="CDD" id="cd00593">
    <property type="entry name" value="RIBOc"/>
    <property type="match status" value="2"/>
</dbReference>
<dbReference type="CDD" id="cd18802">
    <property type="entry name" value="SF2_C_dicer"/>
    <property type="match status" value="1"/>
</dbReference>
<dbReference type="FunFam" id="1.10.1520.10:FF:000023">
    <property type="entry name" value="Endoribonuclease dcr-1"/>
    <property type="match status" value="1"/>
</dbReference>
<dbReference type="FunFam" id="3.40.50.300:FF:000628">
    <property type="entry name" value="Endoribonuclease Dicer"/>
    <property type="match status" value="1"/>
</dbReference>
<dbReference type="FunFam" id="3.30.160.20:FF:000015">
    <property type="entry name" value="endoribonuclease Dicer"/>
    <property type="match status" value="1"/>
</dbReference>
<dbReference type="FunFam" id="3.30.160.380:FF:000002">
    <property type="entry name" value="Endoribonuclease Dicer isoform 1"/>
    <property type="match status" value="1"/>
</dbReference>
<dbReference type="FunFam" id="3.40.50.300:FF:000588">
    <property type="entry name" value="Endoribonuclease Dicer isoform 1"/>
    <property type="match status" value="1"/>
</dbReference>
<dbReference type="FunFam" id="2.170.260.10:FF:000002">
    <property type="entry name" value="Putative Endoribonuclease Dicer"/>
    <property type="match status" value="1"/>
</dbReference>
<dbReference type="FunFam" id="1.10.1520.10:FF:000005">
    <property type="entry name" value="Putative endoribonuclease dicer"/>
    <property type="match status" value="1"/>
</dbReference>
<dbReference type="Gene3D" id="3.30.160.20">
    <property type="match status" value="1"/>
</dbReference>
<dbReference type="Gene3D" id="3.30.160.380">
    <property type="entry name" value="Dicer dimerisation domain"/>
    <property type="match status" value="1"/>
</dbReference>
<dbReference type="Gene3D" id="3.40.50.300">
    <property type="entry name" value="P-loop containing nucleotide triphosphate hydrolases"/>
    <property type="match status" value="2"/>
</dbReference>
<dbReference type="Gene3D" id="2.170.260.10">
    <property type="entry name" value="paz domain"/>
    <property type="match status" value="1"/>
</dbReference>
<dbReference type="Gene3D" id="1.10.1520.10">
    <property type="entry name" value="Ribonuclease III domain"/>
    <property type="match status" value="2"/>
</dbReference>
<dbReference type="InterPro" id="IPR011545">
    <property type="entry name" value="DEAD/DEAH_box_helicase_dom"/>
</dbReference>
<dbReference type="InterPro" id="IPR038248">
    <property type="entry name" value="Dicer_dimer_sf"/>
</dbReference>
<dbReference type="InterPro" id="IPR005034">
    <property type="entry name" value="Dicer_dimerisation_dom"/>
</dbReference>
<dbReference type="InterPro" id="IPR044441">
    <property type="entry name" value="DICER_DSRM"/>
</dbReference>
<dbReference type="InterPro" id="IPR048513">
    <property type="entry name" value="Dicer_PBD"/>
</dbReference>
<dbReference type="InterPro" id="IPR048512">
    <property type="entry name" value="Dicer_platform"/>
</dbReference>
<dbReference type="InterPro" id="IPR014720">
    <property type="entry name" value="dsRBD_dom"/>
</dbReference>
<dbReference type="InterPro" id="IPR014001">
    <property type="entry name" value="Helicase_ATP-bd"/>
</dbReference>
<dbReference type="InterPro" id="IPR001650">
    <property type="entry name" value="Helicase_C-like"/>
</dbReference>
<dbReference type="InterPro" id="IPR027417">
    <property type="entry name" value="P-loop_NTPase"/>
</dbReference>
<dbReference type="InterPro" id="IPR003100">
    <property type="entry name" value="PAZ_dom"/>
</dbReference>
<dbReference type="InterPro" id="IPR036085">
    <property type="entry name" value="PAZ_dom_sf"/>
</dbReference>
<dbReference type="InterPro" id="IPR000999">
    <property type="entry name" value="RNase_III_dom"/>
</dbReference>
<dbReference type="InterPro" id="IPR036389">
    <property type="entry name" value="RNase_III_sf"/>
</dbReference>
<dbReference type="PANTHER" id="PTHR14950">
    <property type="entry name" value="DICER-RELATED"/>
    <property type="match status" value="1"/>
</dbReference>
<dbReference type="PANTHER" id="PTHR14950:SF37">
    <property type="entry name" value="ENDORIBONUCLEASE DICER"/>
    <property type="match status" value="1"/>
</dbReference>
<dbReference type="Pfam" id="PF00270">
    <property type="entry name" value="DEAD"/>
    <property type="match status" value="1"/>
</dbReference>
<dbReference type="Pfam" id="PF03368">
    <property type="entry name" value="Dicer_dimer"/>
    <property type="match status" value="1"/>
</dbReference>
<dbReference type="Pfam" id="PF20932">
    <property type="entry name" value="Dicer_dsRBD"/>
    <property type="match status" value="1"/>
</dbReference>
<dbReference type="Pfam" id="PF20930">
    <property type="entry name" value="Dicer_PBD"/>
    <property type="match status" value="1"/>
</dbReference>
<dbReference type="Pfam" id="PF20931">
    <property type="entry name" value="Dicer_platform"/>
    <property type="match status" value="1"/>
</dbReference>
<dbReference type="Pfam" id="PF00271">
    <property type="entry name" value="Helicase_C"/>
    <property type="match status" value="1"/>
</dbReference>
<dbReference type="Pfam" id="PF02170">
    <property type="entry name" value="PAZ"/>
    <property type="match status" value="1"/>
</dbReference>
<dbReference type="Pfam" id="PF00636">
    <property type="entry name" value="Ribonuclease_3"/>
    <property type="match status" value="2"/>
</dbReference>
<dbReference type="SMART" id="SM00487">
    <property type="entry name" value="DEXDc"/>
    <property type="match status" value="1"/>
</dbReference>
<dbReference type="SMART" id="SM00358">
    <property type="entry name" value="DSRM"/>
    <property type="match status" value="1"/>
</dbReference>
<dbReference type="SMART" id="SM00490">
    <property type="entry name" value="HELICc"/>
    <property type="match status" value="1"/>
</dbReference>
<dbReference type="SMART" id="SM00949">
    <property type="entry name" value="PAZ"/>
    <property type="match status" value="1"/>
</dbReference>
<dbReference type="SMART" id="SM00535">
    <property type="entry name" value="RIBOc"/>
    <property type="match status" value="2"/>
</dbReference>
<dbReference type="SUPFAM" id="SSF54768">
    <property type="entry name" value="dsRNA-binding domain-like"/>
    <property type="match status" value="1"/>
</dbReference>
<dbReference type="SUPFAM" id="SSF52540">
    <property type="entry name" value="P-loop containing nucleoside triphosphate hydrolases"/>
    <property type="match status" value="1"/>
</dbReference>
<dbReference type="SUPFAM" id="SSF101690">
    <property type="entry name" value="PAZ domain"/>
    <property type="match status" value="1"/>
</dbReference>
<dbReference type="SUPFAM" id="SSF69065">
    <property type="entry name" value="RNase III domain-like"/>
    <property type="match status" value="2"/>
</dbReference>
<dbReference type="PROSITE" id="PS51327">
    <property type="entry name" value="DICER_DSRBF"/>
    <property type="match status" value="1"/>
</dbReference>
<dbReference type="PROSITE" id="PS50137">
    <property type="entry name" value="DS_RBD"/>
    <property type="match status" value="1"/>
</dbReference>
<dbReference type="PROSITE" id="PS51192">
    <property type="entry name" value="HELICASE_ATP_BIND_1"/>
    <property type="match status" value="1"/>
</dbReference>
<dbReference type="PROSITE" id="PS51194">
    <property type="entry name" value="HELICASE_CTER"/>
    <property type="match status" value="1"/>
</dbReference>
<dbReference type="PROSITE" id="PS50821">
    <property type="entry name" value="PAZ"/>
    <property type="match status" value="1"/>
</dbReference>
<dbReference type="PROSITE" id="PS00517">
    <property type="entry name" value="RNASE_3_1"/>
    <property type="match status" value="1"/>
</dbReference>
<dbReference type="PROSITE" id="PS50142">
    <property type="entry name" value="RNASE_3_2"/>
    <property type="match status" value="2"/>
</dbReference>
<protein>
    <recommendedName>
        <fullName>Endoribonuclease Dicer</fullName>
        <ecNumber>3.1.26.3</ecNumber>
    </recommendedName>
</protein>
<organism>
    <name type="scientific">Danio rerio</name>
    <name type="common">Zebrafish</name>
    <name type="synonym">Brachydanio rerio</name>
    <dbReference type="NCBI Taxonomy" id="7955"/>
    <lineage>
        <taxon>Eukaryota</taxon>
        <taxon>Metazoa</taxon>
        <taxon>Chordata</taxon>
        <taxon>Craniata</taxon>
        <taxon>Vertebrata</taxon>
        <taxon>Euteleostomi</taxon>
        <taxon>Actinopterygii</taxon>
        <taxon>Neopterygii</taxon>
        <taxon>Teleostei</taxon>
        <taxon>Ostariophysi</taxon>
        <taxon>Cypriniformes</taxon>
        <taxon>Danionidae</taxon>
        <taxon>Danioninae</taxon>
        <taxon>Danio</taxon>
    </lineage>
</organism>
<accession>Q6TV19</accession>
<gene>
    <name type="primary">dicer1</name>
</gene>